<name>GYRA_NOCSJ</name>
<comment type="function">
    <text evidence="1">A type II topoisomerase that negatively supercoils closed circular double-stranded (ds) DNA in an ATP-dependent manner to modulate DNA topology and maintain chromosomes in an underwound state. Negative supercoiling favors strand separation, and DNA replication, transcription, recombination and repair, all of which involve strand separation. Also able to catalyze the interconversion of other topological isomers of dsDNA rings, including catenanes and knotted rings. Type II topoisomerases break and join 2 DNA strands simultaneously in an ATP-dependent manner.</text>
</comment>
<comment type="catalytic activity">
    <reaction evidence="1">
        <text>ATP-dependent breakage, passage and rejoining of double-stranded DNA.</text>
        <dbReference type="EC" id="5.6.2.2"/>
    </reaction>
</comment>
<comment type="subunit">
    <text evidence="1">Heterotetramer, composed of two GyrA and two GyrB chains. In the heterotetramer, GyrA contains the active site tyrosine that forms a transient covalent intermediate with DNA, while GyrB binds cofactors and catalyzes ATP hydrolysis.</text>
</comment>
<comment type="subcellular location">
    <subcellularLocation>
        <location evidence="1">Cytoplasm</location>
    </subcellularLocation>
</comment>
<comment type="miscellaneous">
    <text evidence="1">Few gyrases are as efficient as E.coli at forming negative supercoils. Not all organisms have 2 type II topoisomerases; in organisms with a single type II topoisomerase this enzyme also has to decatenate newly replicated chromosomes.</text>
</comment>
<comment type="similarity">
    <text evidence="1">Belongs to the type II topoisomerase GyrA/ParC subunit family.</text>
</comment>
<evidence type="ECO:0000255" key="1">
    <source>
        <dbReference type="HAMAP-Rule" id="MF_01897"/>
    </source>
</evidence>
<evidence type="ECO:0000255" key="2">
    <source>
        <dbReference type="PROSITE-ProRule" id="PRU01384"/>
    </source>
</evidence>
<evidence type="ECO:0000256" key="3">
    <source>
        <dbReference type="SAM" id="MobiDB-lite"/>
    </source>
</evidence>
<reference key="1">
    <citation type="submission" date="2006-12" db="EMBL/GenBank/DDBJ databases">
        <title>Complete sequence of chromosome 1 of Nocardioides sp. JS614.</title>
        <authorList>
            <person name="Copeland A."/>
            <person name="Lucas S."/>
            <person name="Lapidus A."/>
            <person name="Barry K."/>
            <person name="Detter J.C."/>
            <person name="Glavina del Rio T."/>
            <person name="Hammon N."/>
            <person name="Israni S."/>
            <person name="Dalin E."/>
            <person name="Tice H."/>
            <person name="Pitluck S."/>
            <person name="Thompson L.S."/>
            <person name="Brettin T."/>
            <person name="Bruce D."/>
            <person name="Han C."/>
            <person name="Tapia R."/>
            <person name="Schmutz J."/>
            <person name="Larimer F."/>
            <person name="Land M."/>
            <person name="Hauser L."/>
            <person name="Kyrpides N."/>
            <person name="Kim E."/>
            <person name="Mattes T."/>
            <person name="Gossett J."/>
            <person name="Richardson P."/>
        </authorList>
    </citation>
    <scope>NUCLEOTIDE SEQUENCE [LARGE SCALE GENOMIC DNA]</scope>
    <source>
        <strain>ATCC BAA-499 / JS614</strain>
    </source>
</reference>
<organism>
    <name type="scientific">Nocardioides sp. (strain ATCC BAA-499 / JS614)</name>
    <dbReference type="NCBI Taxonomy" id="196162"/>
    <lineage>
        <taxon>Bacteria</taxon>
        <taxon>Bacillati</taxon>
        <taxon>Actinomycetota</taxon>
        <taxon>Actinomycetes</taxon>
        <taxon>Propionibacteriales</taxon>
        <taxon>Nocardioidaceae</taxon>
        <taxon>Nocardioides</taxon>
    </lineage>
</organism>
<keyword id="KW-0067">ATP-binding</keyword>
<keyword id="KW-0963">Cytoplasm</keyword>
<keyword id="KW-0238">DNA-binding</keyword>
<keyword id="KW-0413">Isomerase</keyword>
<keyword id="KW-0547">Nucleotide-binding</keyword>
<keyword id="KW-1185">Reference proteome</keyword>
<keyword id="KW-0799">Topoisomerase</keyword>
<proteinExistence type="inferred from homology"/>
<sequence length="922" mass="100698">MTETPTDGGSTPPSDGGGPGGRIEPVELQTSMQRAYIDYAMAVIVGRALPDVRDGLKPVHRRVLYAMYDGGYRPDRGFSKCSRVVGDVMGQYHPHGDTAIYDTLVRLAQPWVMRAPLIHGQGNFGSPGNDSAAAMRYTECRMAPLAMEMVRDINEDTVDFQPNYDGRSQEPVVLPARFPNLLVNGSAGIAVGMATNIPPHNLREVAEGARWALEHPDATREELQDALIERIKGPDFPNGALIVGRQGIEQAYRTGRGSITQRAVIEVDEDAKGRTNLVITELPYMVNPDNLALKIAELADSGKVQGISDVRDDTSDRTGQRLVVVLKRDAVARVVLNNLLKHTELQTNFSANMLALVDGVPRTLAIDQFISNWVTHQIDVIRRRTEYRLAEAEKRAHVLRGLVKALDMLDEVIALIRRSPDVAEAREGLIALLDIDEVQATAILDMQLRQLAALQRQKIIDDLAEIEARIADLKDILANVARQRQIVADELAEIVERYGDDRRSQIIAADGDLSMEDLIPDEELVVSITRGGYAKRTRADQYRTQRRGGKGVRGATLRGDDVVEHFIATTNHHWLLFFTTAGRVYRTKAYNLPEASRDAKGGHVAGLLSFQPDENIAQVLAIRDYDQAPYLVLATRDGLVKKTRLGDYNSPRQAGVIAINFRSEDDELIGAELVNPEDHILLVSRKGQSVRFQADDSQLRPMGRATGGVTGMKFRDGDSLLSMSVIRAAQVEAEEAAEASGESVEEMAETRGQWFGLHPQYVFTITDGGFAKRTQIPEYRVQSRGGIGIRAMKLANEDRGELVGAFIVEDGDEILSITSGGQVVRSPIDENFRPTGRSTMGVKFVTPKKGDSVAVVARSVEANGDDELDELDESALDEGGAEGGEVDESADAGTDATIDGSAASDVARTEGDTEPDPGESDG</sequence>
<dbReference type="EC" id="5.6.2.2" evidence="1"/>
<dbReference type="EMBL" id="CP000509">
    <property type="protein sequence ID" value="ABL79557.1"/>
    <property type="molecule type" value="Genomic_DNA"/>
</dbReference>
<dbReference type="SMR" id="A1SCM2"/>
<dbReference type="STRING" id="196162.Noca_0007"/>
<dbReference type="KEGG" id="nca:Noca_0007"/>
<dbReference type="eggNOG" id="COG0188">
    <property type="taxonomic scope" value="Bacteria"/>
</dbReference>
<dbReference type="HOGENOM" id="CLU_002977_6_1_11"/>
<dbReference type="OrthoDB" id="9806486at2"/>
<dbReference type="Proteomes" id="UP000000640">
    <property type="component" value="Chromosome"/>
</dbReference>
<dbReference type="GO" id="GO:0005694">
    <property type="term" value="C:chromosome"/>
    <property type="evidence" value="ECO:0007669"/>
    <property type="project" value="InterPro"/>
</dbReference>
<dbReference type="GO" id="GO:0005737">
    <property type="term" value="C:cytoplasm"/>
    <property type="evidence" value="ECO:0007669"/>
    <property type="project" value="UniProtKB-SubCell"/>
</dbReference>
<dbReference type="GO" id="GO:0009330">
    <property type="term" value="C:DNA topoisomerase type II (double strand cut, ATP-hydrolyzing) complex"/>
    <property type="evidence" value="ECO:0007669"/>
    <property type="project" value="TreeGrafter"/>
</dbReference>
<dbReference type="GO" id="GO:0005524">
    <property type="term" value="F:ATP binding"/>
    <property type="evidence" value="ECO:0007669"/>
    <property type="project" value="UniProtKB-UniRule"/>
</dbReference>
<dbReference type="GO" id="GO:0003677">
    <property type="term" value="F:DNA binding"/>
    <property type="evidence" value="ECO:0007669"/>
    <property type="project" value="UniProtKB-UniRule"/>
</dbReference>
<dbReference type="GO" id="GO:0034335">
    <property type="term" value="F:DNA negative supercoiling activity"/>
    <property type="evidence" value="ECO:0007669"/>
    <property type="project" value="UniProtKB-ARBA"/>
</dbReference>
<dbReference type="GO" id="GO:0006265">
    <property type="term" value="P:DNA topological change"/>
    <property type="evidence" value="ECO:0007669"/>
    <property type="project" value="UniProtKB-UniRule"/>
</dbReference>
<dbReference type="GO" id="GO:0006261">
    <property type="term" value="P:DNA-templated DNA replication"/>
    <property type="evidence" value="ECO:0007669"/>
    <property type="project" value="UniProtKB-UniRule"/>
</dbReference>
<dbReference type="CDD" id="cd00187">
    <property type="entry name" value="TOP4c"/>
    <property type="match status" value="1"/>
</dbReference>
<dbReference type="FunFam" id="1.10.268.10:FF:000001">
    <property type="entry name" value="DNA gyrase subunit A"/>
    <property type="match status" value="1"/>
</dbReference>
<dbReference type="FunFam" id="3.30.1360.40:FF:000002">
    <property type="entry name" value="DNA gyrase subunit A"/>
    <property type="match status" value="1"/>
</dbReference>
<dbReference type="FunFam" id="3.90.199.10:FF:000001">
    <property type="entry name" value="DNA gyrase subunit A"/>
    <property type="match status" value="1"/>
</dbReference>
<dbReference type="Gene3D" id="3.30.1360.40">
    <property type="match status" value="1"/>
</dbReference>
<dbReference type="Gene3D" id="2.120.10.90">
    <property type="entry name" value="DNA gyrase/topoisomerase IV, subunit A, C-terminal"/>
    <property type="match status" value="1"/>
</dbReference>
<dbReference type="Gene3D" id="3.90.199.10">
    <property type="entry name" value="Topoisomerase II, domain 5"/>
    <property type="match status" value="1"/>
</dbReference>
<dbReference type="Gene3D" id="1.10.268.10">
    <property type="entry name" value="Topoisomerase, domain 3"/>
    <property type="match status" value="1"/>
</dbReference>
<dbReference type="HAMAP" id="MF_01897">
    <property type="entry name" value="GyrA"/>
    <property type="match status" value="1"/>
</dbReference>
<dbReference type="InterPro" id="IPR005743">
    <property type="entry name" value="GyrA"/>
</dbReference>
<dbReference type="InterPro" id="IPR006691">
    <property type="entry name" value="GyrA/parC_rep"/>
</dbReference>
<dbReference type="InterPro" id="IPR035516">
    <property type="entry name" value="Gyrase/topoIV_suA_C"/>
</dbReference>
<dbReference type="InterPro" id="IPR013760">
    <property type="entry name" value="Topo_IIA-like_dom_sf"/>
</dbReference>
<dbReference type="InterPro" id="IPR013758">
    <property type="entry name" value="Topo_IIA_A/C_ab"/>
</dbReference>
<dbReference type="InterPro" id="IPR013757">
    <property type="entry name" value="Topo_IIA_A_a_sf"/>
</dbReference>
<dbReference type="InterPro" id="IPR002205">
    <property type="entry name" value="Topo_IIA_dom_A"/>
</dbReference>
<dbReference type="InterPro" id="IPR050220">
    <property type="entry name" value="Type_II_DNA_Topoisomerases"/>
</dbReference>
<dbReference type="NCBIfam" id="TIGR01063">
    <property type="entry name" value="gyrA"/>
    <property type="match status" value="1"/>
</dbReference>
<dbReference type="NCBIfam" id="NF004043">
    <property type="entry name" value="PRK05560.1"/>
    <property type="match status" value="1"/>
</dbReference>
<dbReference type="NCBIfam" id="NF004044">
    <property type="entry name" value="PRK05561.1"/>
    <property type="match status" value="1"/>
</dbReference>
<dbReference type="PANTHER" id="PTHR43493:SF5">
    <property type="entry name" value="DNA GYRASE SUBUNIT A, CHLOROPLASTIC_MITOCHONDRIAL"/>
    <property type="match status" value="1"/>
</dbReference>
<dbReference type="PANTHER" id="PTHR43493">
    <property type="entry name" value="DNA GYRASE/TOPOISOMERASE SUBUNIT A"/>
    <property type="match status" value="1"/>
</dbReference>
<dbReference type="Pfam" id="PF03989">
    <property type="entry name" value="DNA_gyraseA_C"/>
    <property type="match status" value="6"/>
</dbReference>
<dbReference type="Pfam" id="PF00521">
    <property type="entry name" value="DNA_topoisoIV"/>
    <property type="match status" value="1"/>
</dbReference>
<dbReference type="SMART" id="SM00434">
    <property type="entry name" value="TOP4c"/>
    <property type="match status" value="1"/>
</dbReference>
<dbReference type="SUPFAM" id="SSF101904">
    <property type="entry name" value="GyrA/ParC C-terminal domain-like"/>
    <property type="match status" value="1"/>
</dbReference>
<dbReference type="SUPFAM" id="SSF56719">
    <property type="entry name" value="Type II DNA topoisomerase"/>
    <property type="match status" value="1"/>
</dbReference>
<dbReference type="PROSITE" id="PS52040">
    <property type="entry name" value="TOPO_IIA"/>
    <property type="match status" value="1"/>
</dbReference>
<accession>A1SCM2</accession>
<gene>
    <name evidence="1" type="primary">gyrA</name>
    <name type="ordered locus">Noca_0007</name>
</gene>
<feature type="chain" id="PRO_0000409830" description="DNA gyrase subunit A">
    <location>
        <begin position="1"/>
        <end position="922"/>
    </location>
</feature>
<feature type="domain" description="Topo IIA-type catalytic" evidence="2">
    <location>
        <begin position="49"/>
        <end position="518"/>
    </location>
</feature>
<feature type="region of interest" description="Disordered" evidence="3">
    <location>
        <begin position="1"/>
        <end position="24"/>
    </location>
</feature>
<feature type="region of interest" description="Disordered" evidence="3">
    <location>
        <begin position="861"/>
        <end position="922"/>
    </location>
</feature>
<feature type="short sequence motif" description="GyrA-box" evidence="1">
    <location>
        <begin position="545"/>
        <end position="551"/>
    </location>
</feature>
<feature type="compositionally biased region" description="Low complexity" evidence="3">
    <location>
        <begin position="1"/>
        <end position="14"/>
    </location>
</feature>
<feature type="compositionally biased region" description="Acidic residues" evidence="3">
    <location>
        <begin position="863"/>
        <end position="890"/>
    </location>
</feature>
<feature type="compositionally biased region" description="Acidic residues" evidence="3">
    <location>
        <begin position="912"/>
        <end position="922"/>
    </location>
</feature>
<feature type="active site" description="O-(5'-phospho-DNA)-tyrosine intermediate" evidence="1">
    <location>
        <position position="137"/>
    </location>
</feature>
<protein>
    <recommendedName>
        <fullName evidence="1">DNA gyrase subunit A</fullName>
        <ecNumber evidence="1">5.6.2.2</ecNumber>
    </recommendedName>
</protein>